<proteinExistence type="inferred from homology"/>
<keyword id="KW-0963">Cytoplasm</keyword>
<keyword id="KW-0378">Hydrolase</keyword>
<keyword id="KW-0479">Metal-binding</keyword>
<keyword id="KW-0533">Nickel</keyword>
<keyword id="KW-1185">Reference proteome</keyword>
<sequence length="575" mass="60100">MSRLDRSRYAALYGPTVGDRIRLADTDLFIEVTEDRSRGPAGTGTGDEAVFGGGKVIRESMGQSLATRAEGAPDLVITGAVVLDHWGVVKADVGIRDGRIVALGKAGNPDTMDGVHPELVMGPGTEIIAGNGKILTAGAVDCHVHLICPQQVPEALGAGITTLIGGGTGPAEGTKATTVTPGSWNLARMLSALDDWPVNVVLLGKGNTVSDESMWEQLRAGAAGFKLHEDWGTTPAAIDACLRVADAAGVQVALHSDTLNEAGFVEDTLAAIAGRAIHAYHTEGAGGGHAPDIITVAAAGNVLPSSTNPTRPHTVNTLDEHLDMLMVCHHLNPSVPEDLAFAESRIRPSTIAAEDILHDLGAISMIGSDSQAMGRIGEVVLRTWQTAHVMKLRRGSLAGDDRADNTRARRYIAKYTICPAVAHGLDAEIGSVEPGKLADLVLYDPAFFGVRPSLVLKGGFIAWAAMGDANASIPTPQPVLPRPMWGAARGPAAASSLIFVAPAAIEDGLPGRLGLATPVVPVADVRRRGKADLPENTATPDIRVDPDTFTVTVDGEAIEADPVSELPMTQRYFLF</sequence>
<reference key="1">
    <citation type="journal article" date="2007" name="Genome Res.">
        <title>Genome characteristics of facultatively symbiotic Frankia sp. strains reflect host range and host plant biogeography.</title>
        <authorList>
            <person name="Normand P."/>
            <person name="Lapierre P."/>
            <person name="Tisa L.S."/>
            <person name="Gogarten J.P."/>
            <person name="Alloisio N."/>
            <person name="Bagnarol E."/>
            <person name="Bassi C.A."/>
            <person name="Berry A.M."/>
            <person name="Bickhart D.M."/>
            <person name="Choisne N."/>
            <person name="Couloux A."/>
            <person name="Cournoyer B."/>
            <person name="Cruveiller S."/>
            <person name="Daubin V."/>
            <person name="Demange N."/>
            <person name="Francino M.P."/>
            <person name="Goltsman E."/>
            <person name="Huang Y."/>
            <person name="Kopp O.R."/>
            <person name="Labarre L."/>
            <person name="Lapidus A."/>
            <person name="Lavire C."/>
            <person name="Marechal J."/>
            <person name="Martinez M."/>
            <person name="Mastronunzio J.E."/>
            <person name="Mullin B.C."/>
            <person name="Niemann J."/>
            <person name="Pujic P."/>
            <person name="Rawnsley T."/>
            <person name="Rouy Z."/>
            <person name="Schenowitz C."/>
            <person name="Sellstedt A."/>
            <person name="Tavares F."/>
            <person name="Tomkins J.P."/>
            <person name="Vallenet D."/>
            <person name="Valverde C."/>
            <person name="Wall L.G."/>
            <person name="Wang Y."/>
            <person name="Medigue C."/>
            <person name="Benson D.R."/>
        </authorList>
    </citation>
    <scope>NUCLEOTIDE SEQUENCE [LARGE SCALE GENOMIC DNA]</scope>
    <source>
        <strain>DSM 45818 / CECT 9043 / HFP020203 / CcI3</strain>
    </source>
</reference>
<feature type="chain" id="PRO_0000239875" description="Urease subunit alpha">
    <location>
        <begin position="1"/>
        <end position="575"/>
    </location>
</feature>
<feature type="domain" description="Urease" evidence="1">
    <location>
        <begin position="138"/>
        <end position="575"/>
    </location>
</feature>
<feature type="active site" description="Proton donor" evidence="1">
    <location>
        <position position="329"/>
    </location>
</feature>
<feature type="binding site" evidence="1">
    <location>
        <position position="143"/>
    </location>
    <ligand>
        <name>Ni(2+)</name>
        <dbReference type="ChEBI" id="CHEBI:49786"/>
        <label>1</label>
    </ligand>
</feature>
<feature type="binding site" evidence="1">
    <location>
        <position position="145"/>
    </location>
    <ligand>
        <name>Ni(2+)</name>
        <dbReference type="ChEBI" id="CHEBI:49786"/>
        <label>1</label>
    </ligand>
</feature>
<feature type="binding site" description="via carbamate group" evidence="1">
    <location>
        <position position="226"/>
    </location>
    <ligand>
        <name>Ni(2+)</name>
        <dbReference type="ChEBI" id="CHEBI:49786"/>
        <label>1</label>
    </ligand>
</feature>
<feature type="binding site" description="via carbamate group" evidence="1">
    <location>
        <position position="226"/>
    </location>
    <ligand>
        <name>Ni(2+)</name>
        <dbReference type="ChEBI" id="CHEBI:49786"/>
        <label>2</label>
    </ligand>
</feature>
<feature type="binding site" evidence="1">
    <location>
        <position position="228"/>
    </location>
    <ligand>
        <name>substrate</name>
    </ligand>
</feature>
<feature type="binding site" evidence="1">
    <location>
        <position position="255"/>
    </location>
    <ligand>
        <name>Ni(2+)</name>
        <dbReference type="ChEBI" id="CHEBI:49786"/>
        <label>2</label>
    </ligand>
</feature>
<feature type="binding site" evidence="1">
    <location>
        <position position="281"/>
    </location>
    <ligand>
        <name>Ni(2+)</name>
        <dbReference type="ChEBI" id="CHEBI:49786"/>
        <label>2</label>
    </ligand>
</feature>
<feature type="binding site" evidence="1">
    <location>
        <position position="369"/>
    </location>
    <ligand>
        <name>Ni(2+)</name>
        <dbReference type="ChEBI" id="CHEBI:49786"/>
        <label>1</label>
    </ligand>
</feature>
<feature type="modified residue" description="N6-carboxylysine" evidence="1">
    <location>
        <position position="226"/>
    </location>
</feature>
<gene>
    <name evidence="1" type="primary">ureC</name>
    <name type="ordered locus">Francci3_0832</name>
</gene>
<comment type="catalytic activity">
    <reaction evidence="1">
        <text>urea + 2 H2O + H(+) = hydrogencarbonate + 2 NH4(+)</text>
        <dbReference type="Rhea" id="RHEA:20557"/>
        <dbReference type="ChEBI" id="CHEBI:15377"/>
        <dbReference type="ChEBI" id="CHEBI:15378"/>
        <dbReference type="ChEBI" id="CHEBI:16199"/>
        <dbReference type="ChEBI" id="CHEBI:17544"/>
        <dbReference type="ChEBI" id="CHEBI:28938"/>
        <dbReference type="EC" id="3.5.1.5"/>
    </reaction>
</comment>
<comment type="cofactor">
    <cofactor evidence="1">
        <name>Ni cation</name>
        <dbReference type="ChEBI" id="CHEBI:25516"/>
    </cofactor>
    <text evidence="1">Binds 2 nickel ions per subunit.</text>
</comment>
<comment type="pathway">
    <text evidence="1">Nitrogen metabolism; urea degradation; CO(2) and NH(3) from urea (urease route): step 1/1.</text>
</comment>
<comment type="subunit">
    <text evidence="1">Heterotrimer of UreA (gamma), UreB (beta) and UreC (alpha) subunits. Three heterotrimers associate to form the active enzyme.</text>
</comment>
<comment type="subcellular location">
    <subcellularLocation>
        <location evidence="1">Cytoplasm</location>
    </subcellularLocation>
</comment>
<comment type="PTM">
    <text evidence="1">Carboxylation allows a single lysine to coordinate two nickel ions.</text>
</comment>
<comment type="similarity">
    <text evidence="1">Belongs to the metallo-dependent hydrolases superfamily. Urease alpha subunit family.</text>
</comment>
<evidence type="ECO:0000255" key="1">
    <source>
        <dbReference type="HAMAP-Rule" id="MF_01953"/>
    </source>
</evidence>
<dbReference type="EC" id="3.5.1.5" evidence="1"/>
<dbReference type="EMBL" id="CP000249">
    <property type="protein sequence ID" value="ABD10216.1"/>
    <property type="molecule type" value="Genomic_DNA"/>
</dbReference>
<dbReference type="RefSeq" id="WP_011435285.1">
    <property type="nucleotide sequence ID" value="NZ_LRTJ01000051.1"/>
</dbReference>
<dbReference type="SMR" id="Q2JES6"/>
<dbReference type="STRING" id="106370.Francci3_0832"/>
<dbReference type="KEGG" id="fra:Francci3_0832"/>
<dbReference type="eggNOG" id="COG0804">
    <property type="taxonomic scope" value="Bacteria"/>
</dbReference>
<dbReference type="HOGENOM" id="CLU_000980_0_0_11"/>
<dbReference type="OrthoDB" id="9802793at2"/>
<dbReference type="PhylomeDB" id="Q2JES6"/>
<dbReference type="UniPathway" id="UPA00258">
    <property type="reaction ID" value="UER00370"/>
</dbReference>
<dbReference type="Proteomes" id="UP000001937">
    <property type="component" value="Chromosome"/>
</dbReference>
<dbReference type="GO" id="GO:0005737">
    <property type="term" value="C:cytoplasm"/>
    <property type="evidence" value="ECO:0007669"/>
    <property type="project" value="UniProtKB-SubCell"/>
</dbReference>
<dbReference type="GO" id="GO:0016151">
    <property type="term" value="F:nickel cation binding"/>
    <property type="evidence" value="ECO:0007669"/>
    <property type="project" value="UniProtKB-UniRule"/>
</dbReference>
<dbReference type="GO" id="GO:0009039">
    <property type="term" value="F:urease activity"/>
    <property type="evidence" value="ECO:0007669"/>
    <property type="project" value="UniProtKB-UniRule"/>
</dbReference>
<dbReference type="GO" id="GO:0043419">
    <property type="term" value="P:urea catabolic process"/>
    <property type="evidence" value="ECO:0007669"/>
    <property type="project" value="UniProtKB-UniRule"/>
</dbReference>
<dbReference type="CDD" id="cd00375">
    <property type="entry name" value="Urease_alpha"/>
    <property type="match status" value="1"/>
</dbReference>
<dbReference type="Gene3D" id="3.20.20.140">
    <property type="entry name" value="Metal-dependent hydrolases"/>
    <property type="match status" value="1"/>
</dbReference>
<dbReference type="Gene3D" id="2.30.40.10">
    <property type="entry name" value="Urease, subunit C, domain 1"/>
    <property type="match status" value="1"/>
</dbReference>
<dbReference type="HAMAP" id="MF_01953">
    <property type="entry name" value="Urease_alpha"/>
    <property type="match status" value="1"/>
</dbReference>
<dbReference type="InterPro" id="IPR006680">
    <property type="entry name" value="Amidohydro-rel"/>
</dbReference>
<dbReference type="InterPro" id="IPR011059">
    <property type="entry name" value="Metal-dep_hydrolase_composite"/>
</dbReference>
<dbReference type="InterPro" id="IPR032466">
    <property type="entry name" value="Metal_Hydrolase"/>
</dbReference>
<dbReference type="InterPro" id="IPR011612">
    <property type="entry name" value="Urease_alpha_N_dom"/>
</dbReference>
<dbReference type="InterPro" id="IPR050112">
    <property type="entry name" value="Urease_alpha_subunit"/>
</dbReference>
<dbReference type="InterPro" id="IPR017950">
    <property type="entry name" value="Urease_AS"/>
</dbReference>
<dbReference type="InterPro" id="IPR005848">
    <property type="entry name" value="Urease_asu"/>
</dbReference>
<dbReference type="InterPro" id="IPR017951">
    <property type="entry name" value="Urease_asu_c"/>
</dbReference>
<dbReference type="InterPro" id="IPR029754">
    <property type="entry name" value="Urease_Ni-bd"/>
</dbReference>
<dbReference type="NCBIfam" id="NF009685">
    <property type="entry name" value="PRK13206.1"/>
    <property type="match status" value="1"/>
</dbReference>
<dbReference type="NCBIfam" id="NF009686">
    <property type="entry name" value="PRK13207.1"/>
    <property type="match status" value="1"/>
</dbReference>
<dbReference type="NCBIfam" id="TIGR01792">
    <property type="entry name" value="urease_alph"/>
    <property type="match status" value="1"/>
</dbReference>
<dbReference type="PANTHER" id="PTHR43440">
    <property type="entry name" value="UREASE"/>
    <property type="match status" value="1"/>
</dbReference>
<dbReference type="PANTHER" id="PTHR43440:SF1">
    <property type="entry name" value="UREASE"/>
    <property type="match status" value="1"/>
</dbReference>
<dbReference type="Pfam" id="PF01979">
    <property type="entry name" value="Amidohydro_1"/>
    <property type="match status" value="1"/>
</dbReference>
<dbReference type="Pfam" id="PF00449">
    <property type="entry name" value="Urease_alpha"/>
    <property type="match status" value="1"/>
</dbReference>
<dbReference type="PRINTS" id="PR01752">
    <property type="entry name" value="UREASE"/>
</dbReference>
<dbReference type="SUPFAM" id="SSF51338">
    <property type="entry name" value="Composite domain of metallo-dependent hydrolases"/>
    <property type="match status" value="2"/>
</dbReference>
<dbReference type="SUPFAM" id="SSF51556">
    <property type="entry name" value="Metallo-dependent hydrolases"/>
    <property type="match status" value="1"/>
</dbReference>
<dbReference type="PROSITE" id="PS01120">
    <property type="entry name" value="UREASE_1"/>
    <property type="match status" value="1"/>
</dbReference>
<dbReference type="PROSITE" id="PS00145">
    <property type="entry name" value="UREASE_2"/>
    <property type="match status" value="1"/>
</dbReference>
<dbReference type="PROSITE" id="PS51368">
    <property type="entry name" value="UREASE_3"/>
    <property type="match status" value="1"/>
</dbReference>
<name>URE1_FRACC</name>
<accession>Q2JES6</accession>
<protein>
    <recommendedName>
        <fullName evidence="1">Urease subunit alpha</fullName>
        <ecNumber evidence="1">3.5.1.5</ecNumber>
    </recommendedName>
    <alternativeName>
        <fullName evidence="1">Urea amidohydrolase subunit alpha</fullName>
    </alternativeName>
</protein>
<organism>
    <name type="scientific">Frankia casuarinae (strain DSM 45818 / CECT 9043 / HFP020203 / CcI3)</name>
    <dbReference type="NCBI Taxonomy" id="106370"/>
    <lineage>
        <taxon>Bacteria</taxon>
        <taxon>Bacillati</taxon>
        <taxon>Actinomycetota</taxon>
        <taxon>Actinomycetes</taxon>
        <taxon>Frankiales</taxon>
        <taxon>Frankiaceae</taxon>
        <taxon>Frankia</taxon>
    </lineage>
</organism>